<protein>
    <recommendedName>
        <fullName>Glutamate-rich protein 2</fullName>
    </recommendedName>
</protein>
<accession>A1L162</accession>
<accession>A7E2T7</accession>
<proteinExistence type="evidence at protein level"/>
<keyword id="KW-1267">Proteomics identification</keyword>
<keyword id="KW-1185">Reference proteome</keyword>
<gene>
    <name type="primary">ERICH2</name>
</gene>
<sequence>METVNEPETGEVSKDAVIVKQEKNNEYCLQDIDDKLSESAEDDGEDDTNDEDDDEDSNPKKNTQAPLELMAEFLRAEMAREYQLAKKLCQMILIYEPENPEAKEFFTLIEEMLLMEKTQNHEQDGENSDEDSSGESKGESDEELSDESSDEGEDGS</sequence>
<evidence type="ECO:0000256" key="1">
    <source>
        <dbReference type="SAM" id="MobiDB-lite"/>
    </source>
</evidence>
<evidence type="ECO:0000305" key="2"/>
<comment type="interaction">
    <interactant intactId="EBI-2682520">
        <id>A1L162</id>
    </interactant>
    <interactant intactId="EBI-466029">
        <id>P42858</id>
        <label>HTT</label>
    </interactant>
    <organismsDiffer>false</organismsDiffer>
    <experiments>3</experiments>
</comment>
<comment type="interaction">
    <interactant intactId="EBI-2682520">
        <id>A1L162</id>
    </interactant>
    <interactant intactId="EBI-10256178">
        <id>Q7L2V5</id>
        <label>IWS1</label>
    </interactant>
    <organismsDiffer>false</organismsDiffer>
    <experiments>3</experiments>
</comment>
<comment type="interaction">
    <interactant intactId="EBI-2682520">
        <id>A1L162</id>
    </interactant>
    <interactant intactId="EBI-2868511">
        <id>O75367</id>
        <label>MACROH2A1</label>
    </interactant>
    <organismsDiffer>false</organismsDiffer>
    <experiments>6</experiments>
</comment>
<comment type="interaction">
    <interactant intactId="EBI-2682520">
        <id>A1L162</id>
    </interactant>
    <interactant intactId="EBI-11974061">
        <id>Q9UIG4</id>
        <label>PSORS1C2</label>
    </interactant>
    <organismsDiffer>false</organismsDiffer>
    <experiments>3</experiments>
</comment>
<comment type="interaction">
    <interactant intactId="EBI-2682520">
        <id>A1L162</id>
    </interactant>
    <interactant intactId="EBI-727004">
        <id>O00560</id>
        <label>SDCBP</label>
    </interactant>
    <organismsDiffer>false</organismsDiffer>
    <experiments>3</experiments>
</comment>
<comment type="sequence caution" evidence="2">
    <conflict type="erroneous initiation">
        <sequence resource="EMBL-CDS" id="AAI50547"/>
    </conflict>
    <text>Extended N-terminus.</text>
</comment>
<name>ERIC2_HUMAN</name>
<organism>
    <name type="scientific">Homo sapiens</name>
    <name type="common">Human</name>
    <dbReference type="NCBI Taxonomy" id="9606"/>
    <lineage>
        <taxon>Eukaryota</taxon>
        <taxon>Metazoa</taxon>
        <taxon>Chordata</taxon>
        <taxon>Craniata</taxon>
        <taxon>Vertebrata</taxon>
        <taxon>Euteleostomi</taxon>
        <taxon>Mammalia</taxon>
        <taxon>Eutheria</taxon>
        <taxon>Euarchontoglires</taxon>
        <taxon>Primates</taxon>
        <taxon>Haplorrhini</taxon>
        <taxon>Catarrhini</taxon>
        <taxon>Hominidae</taxon>
        <taxon>Homo</taxon>
    </lineage>
</organism>
<feature type="chain" id="PRO_0000346762" description="Glutamate-rich protein 2">
    <location>
        <begin position="1"/>
        <end position="156"/>
    </location>
</feature>
<feature type="region of interest" description="Disordered" evidence="1">
    <location>
        <begin position="29"/>
        <end position="66"/>
    </location>
</feature>
<feature type="region of interest" description="Disordered" evidence="1">
    <location>
        <begin position="116"/>
        <end position="156"/>
    </location>
</feature>
<feature type="compositionally biased region" description="Acidic residues" evidence="1">
    <location>
        <begin position="39"/>
        <end position="56"/>
    </location>
</feature>
<feature type="compositionally biased region" description="Acidic residues" evidence="1">
    <location>
        <begin position="140"/>
        <end position="156"/>
    </location>
</feature>
<reference key="1">
    <citation type="submission" date="2005-09" db="EMBL/GenBank/DDBJ databases">
        <authorList>
            <person name="Mural R.J."/>
            <person name="Istrail S."/>
            <person name="Sutton G.G."/>
            <person name="Florea L."/>
            <person name="Halpern A.L."/>
            <person name="Mobarry C.M."/>
            <person name="Lippert R."/>
            <person name="Walenz B."/>
            <person name="Shatkay H."/>
            <person name="Dew I."/>
            <person name="Miller J.R."/>
            <person name="Flanigan M.J."/>
            <person name="Edwards N.J."/>
            <person name="Bolanos R."/>
            <person name="Fasulo D."/>
            <person name="Halldorsson B.V."/>
            <person name="Hannenhalli S."/>
            <person name="Turner R."/>
            <person name="Yooseph S."/>
            <person name="Lu F."/>
            <person name="Nusskern D.R."/>
            <person name="Shue B.C."/>
            <person name="Zheng X.H."/>
            <person name="Zhong F."/>
            <person name="Delcher A.L."/>
            <person name="Huson D.H."/>
            <person name="Kravitz S.A."/>
            <person name="Mouchard L."/>
            <person name="Reinert K."/>
            <person name="Remington K.A."/>
            <person name="Clark A.G."/>
            <person name="Waterman M.S."/>
            <person name="Eichler E.E."/>
            <person name="Adams M.D."/>
            <person name="Hunkapiller M.W."/>
            <person name="Myers E.W."/>
            <person name="Venter J.C."/>
        </authorList>
    </citation>
    <scope>NUCLEOTIDE SEQUENCE [LARGE SCALE GENOMIC DNA]</scope>
</reference>
<reference key="2">
    <citation type="journal article" date="2004" name="Genome Res.">
        <title>The status, quality, and expansion of the NIH full-length cDNA project: the Mammalian Gene Collection (MGC).</title>
        <authorList>
            <consortium name="The MGC Project Team"/>
        </authorList>
    </citation>
    <scope>NUCLEOTIDE SEQUENCE [LARGE SCALE MRNA]</scope>
</reference>
<dbReference type="EMBL" id="CH471058">
    <property type="protein sequence ID" value="EAX11231.1"/>
    <property type="molecule type" value="Genomic_DNA"/>
</dbReference>
<dbReference type="EMBL" id="BC127676">
    <property type="protein sequence ID" value="AAI27677.1"/>
    <property type="molecule type" value="mRNA"/>
</dbReference>
<dbReference type="EMBL" id="BC150546">
    <property type="protein sequence ID" value="AAI50547.1"/>
    <property type="status" value="ALT_INIT"/>
    <property type="molecule type" value="mRNA"/>
</dbReference>
<dbReference type="CCDS" id="CCDS77486.1"/>
<dbReference type="RefSeq" id="NP_001276876.1">
    <property type="nucleotide sequence ID" value="NM_001289947.2"/>
</dbReference>
<dbReference type="SMR" id="A1L162"/>
<dbReference type="BioGRID" id="130024">
    <property type="interactions" value="10"/>
</dbReference>
<dbReference type="FunCoup" id="A1L162">
    <property type="interactions" value="1"/>
</dbReference>
<dbReference type="IntAct" id="A1L162">
    <property type="interactions" value="6"/>
</dbReference>
<dbReference type="STRING" id="9606.ENSP00000387298"/>
<dbReference type="PhosphoSitePlus" id="A1L162"/>
<dbReference type="BioMuta" id="ERICH2"/>
<dbReference type="jPOST" id="A1L162"/>
<dbReference type="MassIVE" id="A1L162"/>
<dbReference type="PaxDb" id="9606-ENSP00000387298"/>
<dbReference type="PeptideAtlas" id="A1L162"/>
<dbReference type="Antibodypedia" id="57714">
    <property type="antibodies" value="11 antibodies from 7 providers"/>
</dbReference>
<dbReference type="DNASU" id="285141"/>
<dbReference type="Ensembl" id="ENST00000409885.1">
    <property type="protein sequence ID" value="ENSP00000387298.1"/>
    <property type="gene ID" value="ENSG00000204334.8"/>
</dbReference>
<dbReference type="GeneID" id="285141"/>
<dbReference type="KEGG" id="hsa:285141"/>
<dbReference type="UCSC" id="uc002ugg.4">
    <property type="organism name" value="human"/>
</dbReference>
<dbReference type="AGR" id="HGNC:44395"/>
<dbReference type="CTD" id="285141"/>
<dbReference type="DisGeNET" id="285141"/>
<dbReference type="GeneCards" id="ERICH2"/>
<dbReference type="HGNC" id="HGNC:44395">
    <property type="gene designation" value="ERICH2"/>
</dbReference>
<dbReference type="HPA" id="ENSG00000204334">
    <property type="expression patterns" value="Group enriched (choroid plexus, testis)"/>
</dbReference>
<dbReference type="MIM" id="620858">
    <property type="type" value="gene"/>
</dbReference>
<dbReference type="neXtProt" id="NX_A1L162"/>
<dbReference type="OpenTargets" id="ENSG00000204334"/>
<dbReference type="VEuPathDB" id="HostDB:ENSG00000204334"/>
<dbReference type="eggNOG" id="ENOG502S4MD">
    <property type="taxonomic scope" value="Eukaryota"/>
</dbReference>
<dbReference type="GeneTree" id="ENSGT00390000017846"/>
<dbReference type="HOGENOM" id="CLU_083912_0_0_1"/>
<dbReference type="InParanoid" id="A1L162"/>
<dbReference type="OMA" id="DEESFCN"/>
<dbReference type="OrthoDB" id="9950633at2759"/>
<dbReference type="PAN-GO" id="A1L162">
    <property type="GO annotations" value="0 GO annotations based on evolutionary models"/>
</dbReference>
<dbReference type="PhylomeDB" id="A1L162"/>
<dbReference type="PathwayCommons" id="A1L162"/>
<dbReference type="SignaLink" id="A1L162"/>
<dbReference type="BioGRID-ORCS" id="285141">
    <property type="hits" value="3 hits in 276 CRISPR screens"/>
</dbReference>
<dbReference type="ChiTaRS" id="ERICH2">
    <property type="organism name" value="human"/>
</dbReference>
<dbReference type="GenomeRNAi" id="285141"/>
<dbReference type="Pharos" id="A1L162">
    <property type="development level" value="Tdark"/>
</dbReference>
<dbReference type="PRO" id="PR:A1L162"/>
<dbReference type="Proteomes" id="UP000005640">
    <property type="component" value="Chromosome 2"/>
</dbReference>
<dbReference type="RNAct" id="A1L162">
    <property type="molecule type" value="protein"/>
</dbReference>
<dbReference type="Bgee" id="ENSG00000204334">
    <property type="expression patterns" value="Expressed in left testis and 94 other cell types or tissues"/>
</dbReference>
<dbReference type="InterPro" id="IPR026703">
    <property type="entry name" value="ERICH2"/>
</dbReference>
<dbReference type="PANTHER" id="PTHR21520">
    <property type="entry name" value="GLUTAMATE-RICH PROTEIN 2"/>
    <property type="match status" value="1"/>
</dbReference>
<dbReference type="PANTHER" id="PTHR21520:SF2">
    <property type="entry name" value="GLUTAMATE-RICH PROTEIN 2"/>
    <property type="match status" value="1"/>
</dbReference>